<reference key="1">
    <citation type="journal article" date="2002" name="J. Virol.">
        <title>Comparison of the complete DNA sequences of the Oka varicella vaccine and its parental virus.</title>
        <authorList>
            <person name="Gomi Y."/>
            <person name="Sunamachi H."/>
            <person name="Mori Y."/>
            <person name="Nagaike K."/>
            <person name="Takahashi M."/>
            <person name="Yamanishi K."/>
        </authorList>
    </citation>
    <scope>NUCLEOTIDE SEQUENCE [LARGE SCALE GENOMIC DNA]</scope>
    <source>
        <strain>Isolate Human/Japan/P-Oka/1970</strain>
        <strain>Oka varicella vaccine Biken (V-Oka-Biken)</strain>
    </source>
</reference>
<reference key="2">
    <citation type="journal article" date="2008" name="J. Virol.">
        <title>Complete DNA sequences of two oka strain varicella-zoster virus genomes.</title>
        <authorList>
            <person name="Tillieux S.L."/>
            <person name="Halsey W.S."/>
            <person name="Thomas E.S."/>
            <person name="Voycik J.J."/>
            <person name="Sathe G.M."/>
            <person name="Vassilev V."/>
        </authorList>
    </citation>
    <scope>NUCLEOTIDE SEQUENCE [LARGE SCALE GENOMIC DNA]</scope>
    <source>
        <strain>Oka varicella vaccine VarilRix (V-Oka-GSK)</strain>
        <strain>Oka varicella vaccine Varivax (V-Oka-Merck)</strain>
    </source>
</reference>
<feature type="chain" id="PRO_0000385148" description="DNA polymerase processivity factor">
    <location>
        <begin position="1"/>
        <end position="408"/>
    </location>
</feature>
<feature type="short sequence motif" description="Nuclear localization signal" evidence="1">
    <location>
        <begin position="344"/>
        <end position="353"/>
    </location>
</feature>
<accession>Q4JQV9</accession>
<sequence length="408" mass="46060">MDLRSRTDDALDMELHAGFDAPEIARAVLTEKTLTGLISSISPLVNRLRDSILIFSDEGLIIHCSLETEQLYIPIPANMFDQYNWTGPRMVVLAATEGRSSLIDAFRHTKDPSTPTRLYFKFTGQPPERSIIQTMVWQRPGDCGPDDQVQCYKQVVKRELACYTMMFPNLTPDISICLKRDQFTRLQRLLKTFGFTTCFILTATDMYIQTAGGGFISFNVSLDINGSKPTPYNLIRSITNSKRILNNVVYGSGSMREFGVLLETHSGFRSAVQNLKLTRDETCYINFYLALTNSPMVGLYIQRSAPVHSFFYATFLSPKDLKEKLTSMQLFANTESVKDEPPLKKRRNLLTKRNEKNTGNKMGGKLPETTWQEGIGIREYCVAPPVDPAGTLDYSELSRESDVICTVK</sequence>
<proteinExistence type="inferred from homology"/>
<protein>
    <recommendedName>
        <fullName>DNA polymerase processivity factor</fullName>
    </recommendedName>
    <alternativeName>
        <fullName>DNA-binding gene 16 protein</fullName>
    </alternativeName>
    <alternativeName>
        <fullName>Polymerase accessory protein</fullName>
        <shortName>PAP</shortName>
    </alternativeName>
</protein>
<comment type="function">
    <text evidence="1">Plays an essential role in viral DNA replication by acting as the polymerase accessory subunit. Associates with the viral polymerase to increase its processivity and forms high-affinity direct interactions with DNA. Facilitates the origin-binding protein loading onto DNA thus increasing its ability to assemble into a functional complex capable of unwinding duplex DNA (By similarity).</text>
</comment>
<comment type="subunit">
    <text evidence="1">Interacts with the DNA polymerase catalytic subunit. Interacts with the origin-binding protein (By similarity).</text>
</comment>
<comment type="subcellular location">
    <subcellularLocation>
        <location evidence="1">Host nucleus</location>
    </subcellularLocation>
</comment>
<comment type="similarity">
    <text evidence="2">Belongs to the herpesviridae DNA polymerase processivity factor family.</text>
</comment>
<keyword id="KW-0235">DNA replication</keyword>
<keyword id="KW-0238">DNA-binding</keyword>
<keyword id="KW-1048">Host nucleus</keyword>
<evidence type="ECO:0000250" key="1"/>
<evidence type="ECO:0000305" key="2"/>
<organism>
    <name type="scientific">Varicella-zoster virus (strain Oka vaccine)</name>
    <name type="common">HHV-3</name>
    <name type="synonym">Human herpesvirus 3</name>
    <dbReference type="NCBI Taxonomy" id="341980"/>
    <lineage>
        <taxon>Viruses</taxon>
        <taxon>Duplodnaviria</taxon>
        <taxon>Heunggongvirae</taxon>
        <taxon>Peploviricota</taxon>
        <taxon>Herviviricetes</taxon>
        <taxon>Herpesvirales</taxon>
        <taxon>Orthoherpesviridae</taxon>
        <taxon>Alphaherpesvirinae</taxon>
        <taxon>Varicellovirus</taxon>
        <taxon>Varicellovirus humanalpha3</taxon>
        <taxon>Human herpesvirus 3</taxon>
    </lineage>
</organism>
<organismHost>
    <name type="scientific">Homo sapiens</name>
    <name type="common">Human</name>
    <dbReference type="NCBI Taxonomy" id="9606"/>
</organismHost>
<dbReference type="EMBL" id="AB097932">
    <property type="status" value="NOT_ANNOTATED_CDS"/>
    <property type="molecule type" value="Genomic_DNA"/>
</dbReference>
<dbReference type="EMBL" id="AB097933">
    <property type="status" value="NOT_ANNOTATED_CDS"/>
    <property type="molecule type" value="Genomic_DNA"/>
</dbReference>
<dbReference type="EMBL" id="DQ008354">
    <property type="protein sequence ID" value="AAY57684.1"/>
    <property type="molecule type" value="Genomic_DNA"/>
</dbReference>
<dbReference type="EMBL" id="DQ008355">
    <property type="protein sequence ID" value="AAY57755.1"/>
    <property type="molecule type" value="Genomic_DNA"/>
</dbReference>
<dbReference type="SMR" id="Q4JQV9"/>
<dbReference type="IntAct" id="Q4JQV9">
    <property type="interactions" value="18"/>
</dbReference>
<dbReference type="MINT" id="Q4JQV9"/>
<dbReference type="Proteomes" id="UP000002603">
    <property type="component" value="Genome"/>
</dbReference>
<dbReference type="Proteomes" id="UP000008504">
    <property type="component" value="Genome"/>
</dbReference>
<dbReference type="Proteomes" id="UP000008505">
    <property type="component" value="Genome"/>
</dbReference>
<dbReference type="Proteomes" id="UP000008506">
    <property type="component" value="Genome"/>
</dbReference>
<dbReference type="GO" id="GO:0042025">
    <property type="term" value="C:host cell nucleus"/>
    <property type="evidence" value="ECO:0007669"/>
    <property type="project" value="UniProtKB-SubCell"/>
</dbReference>
<dbReference type="GO" id="GO:0003677">
    <property type="term" value="F:DNA binding"/>
    <property type="evidence" value="ECO:0007669"/>
    <property type="project" value="UniProtKB-KW"/>
</dbReference>
<dbReference type="GO" id="GO:0006260">
    <property type="term" value="P:DNA replication"/>
    <property type="evidence" value="ECO:0007669"/>
    <property type="project" value="UniProtKB-KW"/>
</dbReference>
<dbReference type="Gene3D" id="3.70.10.10">
    <property type="match status" value="1"/>
</dbReference>
<dbReference type="InterPro" id="IPR046938">
    <property type="entry name" value="DNA_clamp_sf"/>
</dbReference>
<dbReference type="InterPro" id="IPR003202">
    <property type="entry name" value="Herpes_UL42"/>
</dbReference>
<dbReference type="Pfam" id="PF02282">
    <property type="entry name" value="Herpes_UL42"/>
    <property type="match status" value="2"/>
</dbReference>
<dbReference type="SUPFAM" id="SSF55979">
    <property type="entry name" value="DNA clamp"/>
    <property type="match status" value="2"/>
</dbReference>
<name>PAP_VZVO</name>
<gene>
    <name type="ORF">ORF16</name>
</gene>